<gene>
    <name type="primary">UTP25</name>
    <name type="ORF">PGUG_01973</name>
</gene>
<protein>
    <recommendedName>
        <fullName>U3 small nucleolar RNA-associated protein 25</fullName>
        <shortName>U3 snoRNA-associated protein 25</shortName>
    </recommendedName>
    <alternativeName>
        <fullName>U three protein 25</fullName>
    </alternativeName>
</protein>
<dbReference type="EMBL" id="CH408156">
    <property type="protein sequence ID" value="EDK37875.2"/>
    <property type="molecule type" value="Genomic_DNA"/>
</dbReference>
<dbReference type="RefSeq" id="XP_001486302.1">
    <property type="nucleotide sequence ID" value="XM_001486252.1"/>
</dbReference>
<dbReference type="FunCoup" id="A5DFC2">
    <property type="interactions" value="1259"/>
</dbReference>
<dbReference type="STRING" id="294746.A5DFC2"/>
<dbReference type="GeneID" id="5128130"/>
<dbReference type="KEGG" id="pgu:PGUG_01973"/>
<dbReference type="VEuPathDB" id="FungiDB:PGUG_01973"/>
<dbReference type="eggNOG" id="KOG2340">
    <property type="taxonomic scope" value="Eukaryota"/>
</dbReference>
<dbReference type="HOGENOM" id="CLU_018705_0_1_1"/>
<dbReference type="InParanoid" id="A5DFC2"/>
<dbReference type="OMA" id="PSIFGYH"/>
<dbReference type="OrthoDB" id="10264378at2759"/>
<dbReference type="Proteomes" id="UP000001997">
    <property type="component" value="Unassembled WGS sequence"/>
</dbReference>
<dbReference type="GO" id="GO:0005730">
    <property type="term" value="C:nucleolus"/>
    <property type="evidence" value="ECO:0007669"/>
    <property type="project" value="UniProtKB-SubCell"/>
</dbReference>
<dbReference type="GO" id="GO:0032040">
    <property type="term" value="C:small-subunit processome"/>
    <property type="evidence" value="ECO:0007669"/>
    <property type="project" value="EnsemblFungi"/>
</dbReference>
<dbReference type="GO" id="GO:0019843">
    <property type="term" value="F:rRNA binding"/>
    <property type="evidence" value="ECO:0007669"/>
    <property type="project" value="EnsemblFungi"/>
</dbReference>
<dbReference type="GO" id="GO:0034511">
    <property type="term" value="F:U3 snoRNA binding"/>
    <property type="evidence" value="ECO:0007669"/>
    <property type="project" value="EnsemblFungi"/>
</dbReference>
<dbReference type="GO" id="GO:0000462">
    <property type="term" value="P:maturation of SSU-rRNA from tricistronic rRNA transcript (SSU-rRNA, 5.8S rRNA, LSU-rRNA)"/>
    <property type="evidence" value="ECO:0007669"/>
    <property type="project" value="EnsemblFungi"/>
</dbReference>
<dbReference type="Gene3D" id="3.40.50.300">
    <property type="entry name" value="P-loop containing nucleotide triphosphate hydrolases"/>
    <property type="match status" value="1"/>
</dbReference>
<dbReference type="InterPro" id="IPR027417">
    <property type="entry name" value="P-loop_NTPase"/>
</dbReference>
<dbReference type="InterPro" id="IPR010678">
    <property type="entry name" value="UTP25"/>
</dbReference>
<dbReference type="InterPro" id="IPR053939">
    <property type="entry name" value="UTP25_C"/>
</dbReference>
<dbReference type="InterPro" id="IPR053940">
    <property type="entry name" value="UTP25_NTPase-like"/>
</dbReference>
<dbReference type="PANTHER" id="PTHR12933">
    <property type="entry name" value="ORF PROTEIN-RELATED"/>
    <property type="match status" value="1"/>
</dbReference>
<dbReference type="PANTHER" id="PTHR12933:SF0">
    <property type="entry name" value="U3 SMALL NUCLEOLAR RNA-ASSOCIATED PROTEIN 25 HOMOLOG"/>
    <property type="match status" value="1"/>
</dbReference>
<dbReference type="Pfam" id="PF06862">
    <property type="entry name" value="Utp25_C"/>
    <property type="match status" value="1"/>
</dbReference>
<dbReference type="Pfam" id="PF22916">
    <property type="entry name" value="UTP25_NTPase-like"/>
    <property type="match status" value="1"/>
</dbReference>
<accession>A5DFC2</accession>
<proteinExistence type="inferred from homology"/>
<name>UTP25_PICGU</name>
<keyword id="KW-0539">Nucleus</keyword>
<keyword id="KW-1185">Reference proteome</keyword>
<keyword id="KW-0687">Ribonucleoprotein</keyword>
<keyword id="KW-0690">Ribosome biogenesis</keyword>
<keyword id="KW-0698">rRNA processing</keyword>
<comment type="function">
    <text evidence="1">DEAD-box RNA helicase-like protein required for pre-18S rRNA processing, specifically at sites A0, A1, and A2.</text>
</comment>
<comment type="subunit">
    <text evidence="1">Component of the ribosomal small subunit (SSU) processome composed of at least 40 protein subunits and snoRNA U3.</text>
</comment>
<comment type="subcellular location">
    <subcellularLocation>
        <location evidence="1">Nucleus</location>
        <location evidence="1">Nucleolus</location>
    </subcellularLocation>
</comment>
<comment type="similarity">
    <text evidence="3">Belongs to the UTP25 family.</text>
</comment>
<evidence type="ECO:0000250" key="1"/>
<evidence type="ECO:0000256" key="2">
    <source>
        <dbReference type="SAM" id="MobiDB-lite"/>
    </source>
</evidence>
<evidence type="ECO:0000305" key="3"/>
<sequence>MQESGACRKKPAMPSRNAGSHLVVMKRIQRNGDGAMKRQKHGRRELREVKRTSRRSAKSEDFSGAEDENNGENETEVAVNNSESGEQEGVDDTGMAYNALLTLLGSEKPEKPTKRRKNDEAGVEEINEDDLEIHLTKSDDESDEENEPEVASDDEESDEKFNAFDFHFNQPSEDYMEKASQSVTSKWNNTTKETIDEYVVSTSTPSCMNKESVKLGISSIKKRVRDVYSEKHPSKISGIDASLLDSMLNYKSVLYPYKHYNNTFYRELYSMHAINHVFKTRDNILKNTEKIKHAQEMALEGKSHEDKEYRDQGFTRPKVLILLPTRNAAYEVVENILKYSGSEQQENKKKFKAQFNSNDVPPETKPQDFRDAFKGNNNDFFCLGMKFTRKSAKLYSSFYSSDIIIASPLGLSMILENPDKKKRQYDFLSSIEVFIVDRATQIEAQNWAHVNLVLKYLNKVPKEFHDADFSRIRMWYINDQAPLVRQTLVFCEYTTPPITSLVSSKSVNIGGRVRYKPIYTSKNCIMNSIGLRLKQIFQRFSSSSPMEDSENRFKFFINSMLPSLLSSTSYSDGILVYIPSYFDYVRIKNYMRNSTKFTFEGIDEYSTQSKLTRYRQQFISGKVKILLYTERLHYFRRFEINGVKTLLMYGVPSNPLFYKELVRCIGKSVFKEVADIDLSFVKVMYSQWDAIALERIVGGDRAPVLCSGTNEMYEFR</sequence>
<feature type="chain" id="PRO_0000408132" description="U3 small nucleolar RNA-associated protein 25">
    <location>
        <begin position="1"/>
        <end position="716"/>
    </location>
</feature>
<feature type="region of interest" description="Disordered" evidence="2">
    <location>
        <begin position="1"/>
        <end position="158"/>
    </location>
</feature>
<feature type="compositionally biased region" description="Basic and acidic residues" evidence="2">
    <location>
        <begin position="45"/>
        <end position="61"/>
    </location>
</feature>
<feature type="compositionally biased region" description="Acidic residues" evidence="2">
    <location>
        <begin position="63"/>
        <end position="75"/>
    </location>
</feature>
<feature type="compositionally biased region" description="Basic and acidic residues" evidence="2">
    <location>
        <begin position="107"/>
        <end position="120"/>
    </location>
</feature>
<feature type="compositionally biased region" description="Acidic residues" evidence="2">
    <location>
        <begin position="121"/>
        <end position="131"/>
    </location>
</feature>
<feature type="compositionally biased region" description="Acidic residues" evidence="2">
    <location>
        <begin position="140"/>
        <end position="158"/>
    </location>
</feature>
<reference key="1">
    <citation type="journal article" date="2009" name="Nature">
        <title>Evolution of pathogenicity and sexual reproduction in eight Candida genomes.</title>
        <authorList>
            <person name="Butler G."/>
            <person name="Rasmussen M.D."/>
            <person name="Lin M.F."/>
            <person name="Santos M.A.S."/>
            <person name="Sakthikumar S."/>
            <person name="Munro C.A."/>
            <person name="Rheinbay E."/>
            <person name="Grabherr M."/>
            <person name="Forche A."/>
            <person name="Reedy J.L."/>
            <person name="Agrafioti I."/>
            <person name="Arnaud M.B."/>
            <person name="Bates S."/>
            <person name="Brown A.J.P."/>
            <person name="Brunke S."/>
            <person name="Costanzo M.C."/>
            <person name="Fitzpatrick D.A."/>
            <person name="de Groot P.W.J."/>
            <person name="Harris D."/>
            <person name="Hoyer L.L."/>
            <person name="Hube B."/>
            <person name="Klis F.M."/>
            <person name="Kodira C."/>
            <person name="Lennard N."/>
            <person name="Logue M.E."/>
            <person name="Martin R."/>
            <person name="Neiman A.M."/>
            <person name="Nikolaou E."/>
            <person name="Quail M.A."/>
            <person name="Quinn J."/>
            <person name="Santos M.C."/>
            <person name="Schmitzberger F.F."/>
            <person name="Sherlock G."/>
            <person name="Shah P."/>
            <person name="Silverstein K.A.T."/>
            <person name="Skrzypek M.S."/>
            <person name="Soll D."/>
            <person name="Staggs R."/>
            <person name="Stansfield I."/>
            <person name="Stumpf M.P.H."/>
            <person name="Sudbery P.E."/>
            <person name="Srikantha T."/>
            <person name="Zeng Q."/>
            <person name="Berman J."/>
            <person name="Berriman M."/>
            <person name="Heitman J."/>
            <person name="Gow N.A.R."/>
            <person name="Lorenz M.C."/>
            <person name="Birren B.W."/>
            <person name="Kellis M."/>
            <person name="Cuomo C.A."/>
        </authorList>
    </citation>
    <scope>NUCLEOTIDE SEQUENCE [LARGE SCALE GENOMIC DNA]</scope>
    <source>
        <strain>ATCC 6260 / CBS 566 / DSM 6381 / JCM 1539 / NBRC 10279 / NRRL Y-324</strain>
    </source>
</reference>
<organism>
    <name type="scientific">Meyerozyma guilliermondii (strain ATCC 6260 / CBS 566 / DSM 6381 / JCM 1539 / NBRC 10279 / NRRL Y-324)</name>
    <name type="common">Yeast</name>
    <name type="synonym">Candida guilliermondii</name>
    <dbReference type="NCBI Taxonomy" id="294746"/>
    <lineage>
        <taxon>Eukaryota</taxon>
        <taxon>Fungi</taxon>
        <taxon>Dikarya</taxon>
        <taxon>Ascomycota</taxon>
        <taxon>Saccharomycotina</taxon>
        <taxon>Pichiomycetes</taxon>
        <taxon>Debaryomycetaceae</taxon>
        <taxon>Meyerozyma</taxon>
    </lineage>
</organism>